<keyword id="KW-0249">Electron transport</keyword>
<keyword id="KW-0349">Heme</keyword>
<keyword id="KW-0408">Iron</keyword>
<keyword id="KW-0472">Membrane</keyword>
<keyword id="KW-0479">Metal-binding</keyword>
<keyword id="KW-0496">Mitochondrion</keyword>
<keyword id="KW-0999">Mitochondrion inner membrane</keyword>
<keyword id="KW-0679">Respiratory chain</keyword>
<keyword id="KW-0812">Transmembrane</keyword>
<keyword id="KW-1133">Transmembrane helix</keyword>
<keyword id="KW-0813">Transport</keyword>
<keyword id="KW-0830">Ubiquinone</keyword>
<gene>
    <name type="primary">MT-CYB</name>
    <name type="synonym">COB</name>
    <name type="synonym">CYTB</name>
    <name type="synonym">MTCYB</name>
</gene>
<name>CYB_DERGN</name>
<organism>
    <name type="scientific">Dermanura gnomus</name>
    <name type="common">Dwarf little fruit-eating bat</name>
    <name type="synonym">Artibeus gnomus</name>
    <dbReference type="NCBI Taxonomy" id="3369931"/>
    <lineage>
        <taxon>Eukaryota</taxon>
        <taxon>Metazoa</taxon>
        <taxon>Chordata</taxon>
        <taxon>Craniata</taxon>
        <taxon>Vertebrata</taxon>
        <taxon>Euteleostomi</taxon>
        <taxon>Mammalia</taxon>
        <taxon>Eutheria</taxon>
        <taxon>Laurasiatheria</taxon>
        <taxon>Chiroptera</taxon>
        <taxon>Yangochiroptera</taxon>
        <taxon>Phyllostomidae</taxon>
        <taxon>Stenodermatinae</taxon>
        <taxon>Dermanura</taxon>
    </lineage>
</organism>
<protein>
    <recommendedName>
        <fullName>Cytochrome b</fullName>
    </recommendedName>
    <alternativeName>
        <fullName>Complex III subunit 3</fullName>
    </alternativeName>
    <alternativeName>
        <fullName>Complex III subunit III</fullName>
    </alternativeName>
    <alternativeName>
        <fullName>Cytochrome b-c1 complex subunit 3</fullName>
    </alternativeName>
    <alternativeName>
        <fullName>Ubiquinol-cytochrome-c reductase complex cytochrome b subunit</fullName>
    </alternativeName>
</protein>
<proteinExistence type="inferred from homology"/>
<sequence length="379" mass="42687">MTNIRKTHPLLKIVNSSFVDLPAPSSLSSWWNFGSLLGVCLGVQILTGLFLAMHYTSDTATAFNSVTHICRDVNYGWLLRYLHANGASMFFICLYLHVGRGLYYGSYTYSETWNIGILLLFAVMATAFMGYVLPWGQMSFWGATVITNLLSAIPYIGTDLVQWIWGGFSVDKATLTRFFAFHFLLPFIVTALVMVHLLFLHETGSNNPTGIPSDPDMIPFHPYYTIKDILGFLVMLTALAPLVLFSPDLLGDPDNYIPANPSTTPPHIKPEWYFLFAYAILRSIPNKLGGVLALVMSILILAIVPILHVSKQRSMMFRPLSQCLFWFLVAVLFTLTWIGGQPVEHPYIIIGQTASVLYFLIILFLMPMISMVENYLLKW</sequence>
<feature type="chain" id="PRO_0000060630" description="Cytochrome b">
    <location>
        <begin position="1"/>
        <end position="379"/>
    </location>
</feature>
<feature type="transmembrane region" description="Helical" evidence="2">
    <location>
        <begin position="33"/>
        <end position="53"/>
    </location>
</feature>
<feature type="transmembrane region" description="Helical" evidence="2">
    <location>
        <begin position="77"/>
        <end position="98"/>
    </location>
</feature>
<feature type="transmembrane region" description="Helical" evidence="2">
    <location>
        <begin position="113"/>
        <end position="133"/>
    </location>
</feature>
<feature type="transmembrane region" description="Helical" evidence="2">
    <location>
        <begin position="178"/>
        <end position="198"/>
    </location>
</feature>
<feature type="transmembrane region" description="Helical" evidence="2">
    <location>
        <begin position="226"/>
        <end position="246"/>
    </location>
</feature>
<feature type="transmembrane region" description="Helical" evidence="2">
    <location>
        <begin position="288"/>
        <end position="308"/>
    </location>
</feature>
<feature type="transmembrane region" description="Helical" evidence="2">
    <location>
        <begin position="320"/>
        <end position="340"/>
    </location>
</feature>
<feature type="transmembrane region" description="Helical" evidence="2">
    <location>
        <begin position="347"/>
        <end position="367"/>
    </location>
</feature>
<feature type="binding site" description="axial binding residue" evidence="2">
    <location>
        <position position="83"/>
    </location>
    <ligand>
        <name>heme b</name>
        <dbReference type="ChEBI" id="CHEBI:60344"/>
        <label>b562</label>
    </ligand>
    <ligandPart>
        <name>Fe</name>
        <dbReference type="ChEBI" id="CHEBI:18248"/>
    </ligandPart>
</feature>
<feature type="binding site" description="axial binding residue" evidence="2">
    <location>
        <position position="97"/>
    </location>
    <ligand>
        <name>heme b</name>
        <dbReference type="ChEBI" id="CHEBI:60344"/>
        <label>b566</label>
    </ligand>
    <ligandPart>
        <name>Fe</name>
        <dbReference type="ChEBI" id="CHEBI:18248"/>
    </ligandPart>
</feature>
<feature type="binding site" description="axial binding residue" evidence="2">
    <location>
        <position position="182"/>
    </location>
    <ligand>
        <name>heme b</name>
        <dbReference type="ChEBI" id="CHEBI:60344"/>
        <label>b562</label>
    </ligand>
    <ligandPart>
        <name>Fe</name>
        <dbReference type="ChEBI" id="CHEBI:18248"/>
    </ligandPart>
</feature>
<feature type="binding site" description="axial binding residue" evidence="2">
    <location>
        <position position="196"/>
    </location>
    <ligand>
        <name>heme b</name>
        <dbReference type="ChEBI" id="CHEBI:60344"/>
        <label>b566</label>
    </ligand>
    <ligandPart>
        <name>Fe</name>
        <dbReference type="ChEBI" id="CHEBI:18248"/>
    </ligandPart>
</feature>
<feature type="binding site" evidence="2">
    <location>
        <position position="201"/>
    </location>
    <ligand>
        <name>a ubiquinone</name>
        <dbReference type="ChEBI" id="CHEBI:16389"/>
    </ligand>
</feature>
<geneLocation type="mitochondrion"/>
<reference key="1">
    <citation type="submission" date="1996-08" db="EMBL/GenBank/DDBJ databases">
        <title>Phylogenetic accuracy, stability, and congruence: relationships within and among the New World bat genera Artibeus, Dermanura, and Koopmania.</title>
        <authorList>
            <person name="den Bussche R.A."/>
            <person name="Hudgeons J.L."/>
            <person name="Baker R.J."/>
        </authorList>
    </citation>
    <scope>NUCLEOTIDE SEQUENCE [GENOMIC DNA]</scope>
    <source>
        <strain>Isolate TK 18789 / AMNH 267200</strain>
    </source>
</reference>
<dbReference type="EMBL" id="U66513">
    <property type="protein sequence ID" value="AAB06772.1"/>
    <property type="molecule type" value="Genomic_DNA"/>
</dbReference>
<dbReference type="SMR" id="Q95729"/>
<dbReference type="GO" id="GO:0005743">
    <property type="term" value="C:mitochondrial inner membrane"/>
    <property type="evidence" value="ECO:0007669"/>
    <property type="project" value="UniProtKB-SubCell"/>
</dbReference>
<dbReference type="GO" id="GO:0045275">
    <property type="term" value="C:respiratory chain complex III"/>
    <property type="evidence" value="ECO:0007669"/>
    <property type="project" value="InterPro"/>
</dbReference>
<dbReference type="GO" id="GO:0046872">
    <property type="term" value="F:metal ion binding"/>
    <property type="evidence" value="ECO:0007669"/>
    <property type="project" value="UniProtKB-KW"/>
</dbReference>
<dbReference type="GO" id="GO:0008121">
    <property type="term" value="F:ubiquinol-cytochrome-c reductase activity"/>
    <property type="evidence" value="ECO:0007669"/>
    <property type="project" value="InterPro"/>
</dbReference>
<dbReference type="GO" id="GO:0006122">
    <property type="term" value="P:mitochondrial electron transport, ubiquinol to cytochrome c"/>
    <property type="evidence" value="ECO:0007669"/>
    <property type="project" value="TreeGrafter"/>
</dbReference>
<dbReference type="CDD" id="cd00290">
    <property type="entry name" value="cytochrome_b_C"/>
    <property type="match status" value="1"/>
</dbReference>
<dbReference type="CDD" id="cd00284">
    <property type="entry name" value="Cytochrome_b_N"/>
    <property type="match status" value="1"/>
</dbReference>
<dbReference type="FunFam" id="1.20.810.10:FF:000002">
    <property type="entry name" value="Cytochrome b"/>
    <property type="match status" value="1"/>
</dbReference>
<dbReference type="Gene3D" id="1.20.810.10">
    <property type="entry name" value="Cytochrome Bc1 Complex, Chain C"/>
    <property type="match status" value="1"/>
</dbReference>
<dbReference type="InterPro" id="IPR005798">
    <property type="entry name" value="Cyt_b/b6_C"/>
</dbReference>
<dbReference type="InterPro" id="IPR036150">
    <property type="entry name" value="Cyt_b/b6_C_sf"/>
</dbReference>
<dbReference type="InterPro" id="IPR005797">
    <property type="entry name" value="Cyt_b/b6_N"/>
</dbReference>
<dbReference type="InterPro" id="IPR027387">
    <property type="entry name" value="Cytb/b6-like_sf"/>
</dbReference>
<dbReference type="InterPro" id="IPR030689">
    <property type="entry name" value="Cytochrome_b"/>
</dbReference>
<dbReference type="InterPro" id="IPR048260">
    <property type="entry name" value="Cytochrome_b_C_euk/bac"/>
</dbReference>
<dbReference type="InterPro" id="IPR048259">
    <property type="entry name" value="Cytochrome_b_N_euk/bac"/>
</dbReference>
<dbReference type="InterPro" id="IPR016174">
    <property type="entry name" value="Di-haem_cyt_TM"/>
</dbReference>
<dbReference type="PANTHER" id="PTHR19271">
    <property type="entry name" value="CYTOCHROME B"/>
    <property type="match status" value="1"/>
</dbReference>
<dbReference type="PANTHER" id="PTHR19271:SF16">
    <property type="entry name" value="CYTOCHROME B"/>
    <property type="match status" value="1"/>
</dbReference>
<dbReference type="Pfam" id="PF00032">
    <property type="entry name" value="Cytochrom_B_C"/>
    <property type="match status" value="1"/>
</dbReference>
<dbReference type="Pfam" id="PF00033">
    <property type="entry name" value="Cytochrome_B"/>
    <property type="match status" value="1"/>
</dbReference>
<dbReference type="PIRSF" id="PIRSF038885">
    <property type="entry name" value="COB"/>
    <property type="match status" value="1"/>
</dbReference>
<dbReference type="SUPFAM" id="SSF81648">
    <property type="entry name" value="a domain/subunit of cytochrome bc1 complex (Ubiquinol-cytochrome c reductase)"/>
    <property type="match status" value="1"/>
</dbReference>
<dbReference type="SUPFAM" id="SSF81342">
    <property type="entry name" value="Transmembrane di-heme cytochromes"/>
    <property type="match status" value="1"/>
</dbReference>
<dbReference type="PROSITE" id="PS51003">
    <property type="entry name" value="CYTB_CTER"/>
    <property type="match status" value="1"/>
</dbReference>
<dbReference type="PROSITE" id="PS51002">
    <property type="entry name" value="CYTB_NTER"/>
    <property type="match status" value="1"/>
</dbReference>
<comment type="function">
    <text evidence="2">Component of the ubiquinol-cytochrome c reductase complex (complex III or cytochrome b-c1 complex) that is part of the mitochondrial respiratory chain. The b-c1 complex mediates electron transfer from ubiquinol to cytochrome c. Contributes to the generation of a proton gradient across the mitochondrial membrane that is then used for ATP synthesis.</text>
</comment>
<comment type="cofactor">
    <cofactor evidence="2">
        <name>heme b</name>
        <dbReference type="ChEBI" id="CHEBI:60344"/>
    </cofactor>
    <text evidence="2">Binds 2 heme b groups non-covalently.</text>
</comment>
<comment type="subunit">
    <text evidence="2">The cytochrome bc1 complex contains 11 subunits: 3 respiratory subunits (MT-CYB, CYC1 and UQCRFS1), 2 core proteins (UQCRC1 and UQCRC2) and 6 low-molecular weight proteins (UQCRH/QCR6, UQCRB/QCR7, UQCRQ/QCR8, UQCR10/QCR9, UQCR11/QCR10 and a cleavage product of UQCRFS1). This cytochrome bc1 complex then forms a dimer.</text>
</comment>
<comment type="subcellular location">
    <subcellularLocation>
        <location evidence="2">Mitochondrion inner membrane</location>
        <topology evidence="2">Multi-pass membrane protein</topology>
    </subcellularLocation>
</comment>
<comment type="miscellaneous">
    <text evidence="1">Heme 1 (or BL or b562) is low-potential and absorbs at about 562 nm, and heme 2 (or BH or b566) is high-potential and absorbs at about 566 nm.</text>
</comment>
<comment type="similarity">
    <text evidence="3 4">Belongs to the cytochrome b family.</text>
</comment>
<comment type="caution">
    <text evidence="2">The full-length protein contains only eight transmembrane helices, not nine as predicted by bioinformatics tools.</text>
</comment>
<evidence type="ECO:0000250" key="1"/>
<evidence type="ECO:0000250" key="2">
    <source>
        <dbReference type="UniProtKB" id="P00157"/>
    </source>
</evidence>
<evidence type="ECO:0000255" key="3">
    <source>
        <dbReference type="PROSITE-ProRule" id="PRU00967"/>
    </source>
</evidence>
<evidence type="ECO:0000255" key="4">
    <source>
        <dbReference type="PROSITE-ProRule" id="PRU00968"/>
    </source>
</evidence>
<accession>Q95729</accession>